<sequence>MTEQLNTNQQNDEAQFMIQRIYIKDLSYETPNTPAVFQQQWEPELKLDLNTTTTQLDKNVYEVVLTVTTTVMNQKTTAFLVEVKQAGIFTIQGAAASQLDHLLHSFCPSILFPYAREAITSQVIRGSFPQLVLAPINFDALYMQQLEEKQKATGAKDETVSH</sequence>
<evidence type="ECO:0000255" key="1">
    <source>
        <dbReference type="HAMAP-Rule" id="MF_00821"/>
    </source>
</evidence>
<accession>A5IEA6</accession>
<keyword id="KW-0143">Chaperone</keyword>
<keyword id="KW-0963">Cytoplasm</keyword>
<keyword id="KW-0653">Protein transport</keyword>
<keyword id="KW-0811">Translocation</keyword>
<keyword id="KW-0813">Transport</keyword>
<name>SECB_LEGPC</name>
<reference key="1">
    <citation type="submission" date="2006-11" db="EMBL/GenBank/DDBJ databases">
        <title>Identification and characterization of a new conjugation/ type IVA secretion system (trb/tra) of L. pneumophila Corby localized on a mobile genomic island.</title>
        <authorList>
            <person name="Gloeckner G."/>
            <person name="Albert-Weissenberger C."/>
            <person name="Weinmann E."/>
            <person name="Jacobi S."/>
            <person name="Schunder E."/>
            <person name="Steinert M."/>
            <person name="Buchrieser C."/>
            <person name="Hacker J."/>
            <person name="Heuner K."/>
        </authorList>
    </citation>
    <scope>NUCLEOTIDE SEQUENCE [LARGE SCALE GENOMIC DNA]</scope>
    <source>
        <strain>Corby</strain>
    </source>
</reference>
<dbReference type="EMBL" id="CP000675">
    <property type="protein sequence ID" value="ABQ55706.1"/>
    <property type="molecule type" value="Genomic_DNA"/>
</dbReference>
<dbReference type="RefSeq" id="WP_011216200.1">
    <property type="nucleotide sequence ID" value="NZ_JAPMSS010000012.1"/>
</dbReference>
<dbReference type="SMR" id="A5IEA6"/>
<dbReference type="KEGG" id="lpc:LPC_1773"/>
<dbReference type="HOGENOM" id="CLU_111574_1_0_6"/>
<dbReference type="GO" id="GO:0005737">
    <property type="term" value="C:cytoplasm"/>
    <property type="evidence" value="ECO:0007669"/>
    <property type="project" value="UniProtKB-SubCell"/>
</dbReference>
<dbReference type="GO" id="GO:0051082">
    <property type="term" value="F:unfolded protein binding"/>
    <property type="evidence" value="ECO:0007669"/>
    <property type="project" value="InterPro"/>
</dbReference>
<dbReference type="GO" id="GO:0006457">
    <property type="term" value="P:protein folding"/>
    <property type="evidence" value="ECO:0007669"/>
    <property type="project" value="UniProtKB-UniRule"/>
</dbReference>
<dbReference type="GO" id="GO:0051262">
    <property type="term" value="P:protein tetramerization"/>
    <property type="evidence" value="ECO:0007669"/>
    <property type="project" value="InterPro"/>
</dbReference>
<dbReference type="GO" id="GO:0015031">
    <property type="term" value="P:protein transport"/>
    <property type="evidence" value="ECO:0007669"/>
    <property type="project" value="UniProtKB-UniRule"/>
</dbReference>
<dbReference type="Gene3D" id="3.10.420.10">
    <property type="entry name" value="SecB-like"/>
    <property type="match status" value="1"/>
</dbReference>
<dbReference type="HAMAP" id="MF_00821">
    <property type="entry name" value="SecB"/>
    <property type="match status" value="1"/>
</dbReference>
<dbReference type="InterPro" id="IPR003708">
    <property type="entry name" value="SecB"/>
</dbReference>
<dbReference type="InterPro" id="IPR035958">
    <property type="entry name" value="SecB-like_sf"/>
</dbReference>
<dbReference type="NCBIfam" id="NF004393">
    <property type="entry name" value="PRK05751.1-4"/>
    <property type="match status" value="1"/>
</dbReference>
<dbReference type="NCBIfam" id="TIGR00809">
    <property type="entry name" value="secB"/>
    <property type="match status" value="1"/>
</dbReference>
<dbReference type="PANTHER" id="PTHR36918">
    <property type="match status" value="1"/>
</dbReference>
<dbReference type="PANTHER" id="PTHR36918:SF1">
    <property type="entry name" value="PROTEIN-EXPORT PROTEIN SECB"/>
    <property type="match status" value="1"/>
</dbReference>
<dbReference type="Pfam" id="PF02556">
    <property type="entry name" value="SecB"/>
    <property type="match status" value="1"/>
</dbReference>
<dbReference type="PRINTS" id="PR01594">
    <property type="entry name" value="SECBCHAPRONE"/>
</dbReference>
<dbReference type="SUPFAM" id="SSF54611">
    <property type="entry name" value="SecB-like"/>
    <property type="match status" value="1"/>
</dbReference>
<organism>
    <name type="scientific">Legionella pneumophila (strain Corby)</name>
    <dbReference type="NCBI Taxonomy" id="400673"/>
    <lineage>
        <taxon>Bacteria</taxon>
        <taxon>Pseudomonadati</taxon>
        <taxon>Pseudomonadota</taxon>
        <taxon>Gammaproteobacteria</taxon>
        <taxon>Legionellales</taxon>
        <taxon>Legionellaceae</taxon>
        <taxon>Legionella</taxon>
    </lineage>
</organism>
<proteinExistence type="inferred from homology"/>
<protein>
    <recommendedName>
        <fullName evidence="1">Protein-export protein SecB</fullName>
    </recommendedName>
</protein>
<gene>
    <name evidence="1" type="primary">secB</name>
    <name type="ordered locus">LPC_1773</name>
</gene>
<feature type="chain" id="PRO_1000062483" description="Protein-export protein SecB">
    <location>
        <begin position="1"/>
        <end position="162"/>
    </location>
</feature>
<comment type="function">
    <text evidence="1">One of the proteins required for the normal export of preproteins out of the cell cytoplasm. It is a molecular chaperone that binds to a subset of precursor proteins, maintaining them in a translocation-competent state. It also specifically binds to its receptor SecA.</text>
</comment>
<comment type="subunit">
    <text evidence="1">Homotetramer, a dimer of dimers. One homotetramer interacts with 1 SecA dimer.</text>
</comment>
<comment type="subcellular location">
    <subcellularLocation>
        <location evidence="1">Cytoplasm</location>
    </subcellularLocation>
</comment>
<comment type="similarity">
    <text evidence="1">Belongs to the SecB family.</text>
</comment>